<sequence length="478" mass="56070">MFQPLLDAYVESASIEKMASKSPPPLKIAVANWWGDEEIKEFKNSVLYFILSQRYTITLHQNPNEFSDLVFGNPLGSARKILSYQNAKRVFYTGENESPNFNLFDYAIGFDELDFNDRYLRMPLYYDRLHHKAESVNDTTAPYKLKDNSLYALKKPSHCFKEKHPNLCAVVNDESDPLKRGFASFVASNPNAPIRNAFYDALNSIEPVTGGGSVRNTLGYNVKNKNEFLSQYKFNLCFENTQGYGYVTEKIIDAYFSHTIPIYWGSPSVAKDFNPKSFVNVHDFKNFDEAIDYIKYLHTHKNAYLDMLYENPLNTLDGKAYFYQNLSFKKILAFFKTILENDTIYHDNPFIFCRDLNEPLVTIDDLRVNYDDLRVNYDDLRINYDDLRVNYDDLRINYDDLRVNYDDLRVNYDDLRINYDDLRVNYDDLRVNYERLLSKATPLLELSQNTTSKIYRKAYQKSLPLLRAIRRWVKKLGL</sequence>
<comment type="function">
    <text evidence="1 2 3 4 5">Involved in the biosynthesis of the Lewis X (LeX) trisaccharide of the lipopolysaccharide (LPS) O-antigen. Catalyzes the addition of fucose in alpha 1-3 linkage to Gal-beta-1-4-GlcNAc-beta-O-R (LacNAc-R) type II acceptor.</text>
</comment>
<comment type="catalytic activity">
    <reaction evidence="1 2 3 4 5">
        <text>a beta-D-galactosyl-(1-&gt;4)-N-acetyl-beta-D-glucosaminyl derivative + GDP-beta-L-fucose = a beta-D-galactosyl-(1-&gt;4)-[alpha-L-fucosyl-(1-&gt;3)]-N-acetyl-beta-D-glucosaminyl derivative + GDP + H(+)</text>
        <dbReference type="Rhea" id="RHEA:14257"/>
        <dbReference type="ChEBI" id="CHEBI:15378"/>
        <dbReference type="ChEBI" id="CHEBI:57273"/>
        <dbReference type="ChEBI" id="CHEBI:58189"/>
        <dbReference type="ChEBI" id="CHEBI:133507"/>
        <dbReference type="ChEBI" id="CHEBI:137941"/>
        <dbReference type="EC" id="2.4.1.152"/>
    </reaction>
</comment>
<comment type="biophysicochemical properties">
    <kinetics>
        <KM evidence="1">0.31 mM for Gal-beta-1-4-GlcNAc-beta-O-R</KM>
        <KM evidence="1">48 uM for GDP-fucose</KM>
        <Vmax evidence="1">11.8 umol/min/mg enzyme toward Gal-beta-1-4-GlcNAc-beta-O-R</Vmax>
    </kinetics>
</comment>
<comment type="pathway">
    <text evidence="6 7 8 9">Lipopolysaccharide biosynthesis; LPS oligosaccharide biosynthesis.</text>
</comment>
<comment type="subunit">
    <text evidence="3">Homodimer.</text>
</comment>
<comment type="subcellular location">
    <subcellularLocation>
        <location evidence="5">Membrane</location>
        <topology evidence="5">Peripheral membrane protein</topology>
    </subcellularLocation>
    <subcellularLocation>
        <location evidence="5">Cytoplasm</location>
    </subcellularLocation>
    <text evidence="5">Predominantly localizes at the membrane.</text>
</comment>
<comment type="domain">
    <text evidence="3">The tandem repeat region, which may form a leucine zipper structure, is essential for dimerization as well as for enzyme stability.</text>
</comment>
<comment type="similarity">
    <text evidence="11">Belongs to the glycosyltransferase 10 family.</text>
</comment>
<protein>
    <recommendedName>
        <fullName evidence="10">Alpha-(1,3)-fucosyltransferase FucT</fullName>
        <ecNumber evidence="1 2 3 4 5">2.4.1.152</ecNumber>
    </recommendedName>
    <alternativeName>
        <fullName evidence="11">4-galactosyl-N-acetylglucosaminide 3-alpha-L-fucosyltransferase</fullName>
    </alternativeName>
</protein>
<gene>
    <name evidence="12" type="primary">fucT</name>
</gene>
<feature type="chain" id="PRO_0000438421" description="Alpha-(1,3)-fucosyltransferase FucT" evidence="11">
    <location>
        <begin position="1"/>
        <end position="478"/>
    </location>
</feature>
<feature type="repeat" description="1" evidence="3">
    <location>
        <begin position="364"/>
        <end position="370"/>
    </location>
</feature>
<feature type="repeat" description="2" evidence="3">
    <location>
        <begin position="371"/>
        <end position="377"/>
    </location>
</feature>
<feature type="repeat" description="3" evidence="3">
    <location>
        <begin position="378"/>
        <end position="384"/>
    </location>
</feature>
<feature type="repeat" description="4" evidence="3">
    <location>
        <begin position="385"/>
        <end position="391"/>
    </location>
</feature>
<feature type="repeat" description="5" evidence="3">
    <location>
        <begin position="392"/>
        <end position="398"/>
    </location>
</feature>
<feature type="repeat" description="6" evidence="3">
    <location>
        <begin position="399"/>
        <end position="405"/>
    </location>
</feature>
<feature type="repeat" description="7" evidence="3">
    <location>
        <begin position="406"/>
        <end position="412"/>
    </location>
</feature>
<feature type="repeat" description="8" evidence="3">
    <location>
        <begin position="413"/>
        <end position="419"/>
    </location>
</feature>
<feature type="repeat" description="9" evidence="3">
    <location>
        <begin position="420"/>
        <end position="426"/>
    </location>
</feature>
<feature type="repeat" description="10" evidence="3">
    <location>
        <begin position="427"/>
        <end position="433"/>
    </location>
</feature>
<feature type="region of interest" description="Important for acceptor specificity" evidence="1">
    <location>
        <begin position="347"/>
        <end position="353"/>
    </location>
</feature>
<feature type="region of interest" description="10 X 7 AA tandem repeat of D-D-L-R-[IV]-N-Y" evidence="3">
    <location>
        <begin position="364"/>
        <end position="433"/>
    </location>
</feature>
<feature type="region of interest" description="May be involved in membrane binding" evidence="3">
    <location>
        <begin position="434"/>
        <end position="478"/>
    </location>
</feature>
<feature type="binding site" evidence="4 15">
    <location>
        <position position="94"/>
    </location>
    <ligand>
        <name>substrate</name>
    </ligand>
</feature>
<feature type="binding site" evidence="4 15">
    <location>
        <begin position="186"/>
        <end position="189"/>
    </location>
    <ligand>
        <name>substrate</name>
    </ligand>
</feature>
<feature type="binding site" evidence="4 15">
    <location>
        <position position="195"/>
    </location>
    <ligand>
        <name>substrate</name>
    </ligand>
</feature>
<feature type="binding site" evidence="4 15">
    <location>
        <begin position="222"/>
        <end position="225"/>
    </location>
    <ligand>
        <name>substrate</name>
    </ligand>
</feature>
<feature type="binding site" evidence="4 15">
    <location>
        <position position="240"/>
    </location>
    <ligand>
        <name>substrate</name>
    </ligand>
</feature>
<feature type="binding site" evidence="4 15">
    <location>
        <begin position="246"/>
        <end position="250"/>
    </location>
    <ligand>
        <name>substrate</name>
    </ligand>
</feature>
<feature type="site" description="Important for catalytic activity" evidence="4">
    <location>
        <position position="95"/>
    </location>
</feature>
<feature type="mutagenesis site" description="Loss of alpha-(1,3)-fucosyltransferase catalytic activity." evidence="4">
    <original>E</original>
    <variation>D</variation>
    <location>
        <position position="95"/>
    </location>
</feature>
<feature type="mutagenesis site" description="Loss of alpha-(1,3)-fucosyltransferase catalytic activity." evidence="4">
    <original>R</original>
    <variation>A</variation>
    <location>
        <position position="195"/>
    </location>
</feature>
<feature type="mutagenesis site" description="Loss of 97% alpha-(1,3)-fucosyltransferase catalytic activity with a 6-fold decrease in affinity for GDP-fucose and a 14-fold increase in affinity for LacNAc." evidence="4">
    <original>R</original>
    <variation>K</variation>
    <location>
        <position position="195"/>
    </location>
</feature>
<feature type="mutagenesis site" description="Loss of 90% alpha-(1,3)-fucosyltransferase catalytic activity with an 18-fold increase in affinity for LacNAc." evidence="4">
    <original>N</original>
    <variation>A</variation>
    <location>
        <position position="240"/>
    </location>
</feature>
<feature type="mutagenesis site" description="Loss of 80% alpha-(1,3)-fucosyltransferase catalytic activity." evidence="4">
    <original>Y</original>
    <variation>A</variation>
    <location>
        <position position="246"/>
    </location>
</feature>
<feature type="mutagenesis site" description="Loss of 95% alpha-(1,3)-fucosyltransferase catalytic activity." evidence="4">
    <original>Y</original>
    <variation>F</variation>
    <location>
        <position position="246"/>
    </location>
</feature>
<feature type="mutagenesis site" description="Loss of alpha-(1,3)-fucosyltransferase catalytic activity." evidence="4">
    <original>E</original>
    <variation>A</variation>
    <variation>D</variation>
    <variation>Q</variation>
    <location>
        <position position="249"/>
    </location>
</feature>
<feature type="mutagenesis site" description="Loss of alpha-(1,3)-fucosyltransferase catalytic activity." evidence="4">
    <original>K</original>
    <variation>A</variation>
    <location>
        <position position="250"/>
    </location>
</feature>
<feature type="mutagenesis site" description="Reduced alpha-(1,3)-fucosyltransferase activity characterized by a 6-fold decrease in affinity and 7-fold decrease in catalytic efficiency. Acquires alpha-(1,4)-fucosyltransferase activity." evidence="1">
    <original>DNPFIFC</original>
    <variation>CNDAHYSALH</variation>
    <location>
        <begin position="347"/>
        <end position="353"/>
    </location>
</feature>
<feature type="mutagenesis site" description="No effect on alpha-(1,3)-fucosyltransferase activity." evidence="2">
    <original>F</original>
    <variation>Y</variation>
    <variation>A</variation>
    <location>
        <position position="350"/>
    </location>
</feature>
<feature type="mutagenesis site" description="75 percent reduction in alpha-(1,3)-fucosyltransferase activity." evidence="2">
    <original>F</original>
    <variation>A</variation>
    <location>
        <position position="352"/>
    </location>
</feature>
<feature type="mutagenesis site" description="No effect on alpha-(1,3)-fucosyltransferase activity." evidence="2">
    <original>F</original>
    <variation>Y</variation>
    <location>
        <position position="352"/>
    </location>
</feature>
<feature type="mutagenesis site" description="Probably no major loss of alpha-(1,3)-fucosyltransferase catalytic activity. No effect on dimerization." evidence="3 4">
    <location>
        <begin position="456"/>
        <end position="478"/>
    </location>
</feature>
<feature type="helix" evidence="16">
    <location>
        <begin position="3"/>
        <end position="12"/>
    </location>
</feature>
<feature type="strand" evidence="16">
    <location>
        <begin position="19"/>
        <end position="21"/>
    </location>
</feature>
<feature type="strand" evidence="16">
    <location>
        <begin position="25"/>
        <end position="29"/>
    </location>
</feature>
<feature type="helix" evidence="16">
    <location>
        <begin position="36"/>
        <end position="43"/>
    </location>
</feature>
<feature type="helix" evidence="16">
    <location>
        <begin position="46"/>
        <end position="52"/>
    </location>
</feature>
<feature type="strand" evidence="16">
    <location>
        <begin position="55"/>
        <end position="60"/>
    </location>
</feature>
<feature type="strand" evidence="19">
    <location>
        <begin position="63"/>
        <end position="65"/>
    </location>
</feature>
<feature type="strand" evidence="16">
    <location>
        <begin position="68"/>
        <end position="72"/>
    </location>
</feature>
<feature type="helix" evidence="16">
    <location>
        <begin position="77"/>
        <end position="85"/>
    </location>
</feature>
<feature type="strand" evidence="16">
    <location>
        <begin position="87"/>
        <end position="91"/>
    </location>
</feature>
<feature type="strand" evidence="16">
    <location>
        <begin position="94"/>
        <end position="96"/>
    </location>
</feature>
<feature type="turn" evidence="16">
    <location>
        <begin position="101"/>
        <end position="103"/>
    </location>
</feature>
<feature type="strand" evidence="16">
    <location>
        <begin position="105"/>
        <end position="111"/>
    </location>
</feature>
<feature type="helix" evidence="16">
    <location>
        <begin position="116"/>
        <end position="118"/>
    </location>
</feature>
<feature type="strand" evidence="16">
    <location>
        <begin position="119"/>
        <end position="121"/>
    </location>
</feature>
<feature type="helix" evidence="16">
    <location>
        <begin position="124"/>
        <end position="135"/>
    </location>
</feature>
<feature type="strand" evidence="19">
    <location>
        <begin position="136"/>
        <end position="140"/>
    </location>
</feature>
<feature type="helix" evidence="16">
    <location>
        <begin position="150"/>
        <end position="152"/>
    </location>
</feature>
<feature type="helix" evidence="16">
    <location>
        <begin position="160"/>
        <end position="163"/>
    </location>
</feature>
<feature type="helix" evidence="16">
    <location>
        <begin position="165"/>
        <end position="171"/>
    </location>
</feature>
<feature type="strand" evidence="16">
    <location>
        <begin position="179"/>
        <end position="185"/>
    </location>
</feature>
<feature type="helix" evidence="16">
    <location>
        <begin position="193"/>
        <end position="202"/>
    </location>
</feature>
<feature type="turn" evidence="16">
    <location>
        <begin position="203"/>
        <end position="205"/>
    </location>
</feature>
<feature type="strand" evidence="18">
    <location>
        <begin position="208"/>
        <end position="210"/>
    </location>
</feature>
<feature type="strand" evidence="19">
    <location>
        <begin position="212"/>
        <end position="215"/>
    </location>
</feature>
<feature type="strand" evidence="16">
    <location>
        <begin position="218"/>
        <end position="220"/>
    </location>
</feature>
<feature type="helix" evidence="16">
    <location>
        <begin position="225"/>
        <end position="229"/>
    </location>
</feature>
<feature type="strand" evidence="16">
    <location>
        <begin position="232"/>
        <end position="238"/>
    </location>
</feature>
<feature type="helix" evidence="16">
    <location>
        <begin position="250"/>
        <end position="256"/>
    </location>
</feature>
<feature type="strand" evidence="16">
    <location>
        <begin position="260"/>
        <end position="265"/>
    </location>
</feature>
<feature type="helix" evidence="16">
    <location>
        <begin position="269"/>
        <end position="271"/>
    </location>
</feature>
<feature type="helix" evidence="16">
    <location>
        <begin position="275"/>
        <end position="277"/>
    </location>
</feature>
<feature type="strand" evidence="16">
    <location>
        <begin position="278"/>
        <end position="280"/>
    </location>
</feature>
<feature type="helix" evidence="16">
    <location>
        <begin position="281"/>
        <end position="283"/>
    </location>
</feature>
<feature type="strand" evidence="16">
    <location>
        <begin position="284"/>
        <end position="286"/>
    </location>
</feature>
<feature type="helix" evidence="16">
    <location>
        <begin position="287"/>
        <end position="298"/>
    </location>
</feature>
<feature type="helix" evidence="16">
    <location>
        <begin position="301"/>
        <end position="309"/>
    </location>
</feature>
<feature type="strand" evidence="17">
    <location>
        <begin position="312"/>
        <end position="316"/>
    </location>
</feature>
<feature type="strand" evidence="17">
    <location>
        <begin position="319"/>
        <end position="321"/>
    </location>
</feature>
<feature type="helix" evidence="16">
    <location>
        <begin position="323"/>
        <end position="325"/>
    </location>
</feature>
<feature type="helix" evidence="16">
    <location>
        <begin position="328"/>
        <end position="340"/>
    </location>
</feature>
<accession>O30511</accession>
<evidence type="ECO:0000269" key="1">
    <source>
    </source>
</evidence>
<evidence type="ECO:0000269" key="2">
    <source>
    </source>
</evidence>
<evidence type="ECO:0000269" key="3">
    <source>
    </source>
</evidence>
<evidence type="ECO:0000269" key="4">
    <source>
    </source>
</evidence>
<evidence type="ECO:0000269" key="5">
    <source>
    </source>
</evidence>
<evidence type="ECO:0000303" key="6">
    <source>
    </source>
</evidence>
<evidence type="ECO:0000303" key="7">
    <source>
    </source>
</evidence>
<evidence type="ECO:0000303" key="8">
    <source>
    </source>
</evidence>
<evidence type="ECO:0000303" key="9">
    <source>
    </source>
</evidence>
<evidence type="ECO:0000303" key="10">
    <source>
    </source>
</evidence>
<evidence type="ECO:0000305" key="11"/>
<evidence type="ECO:0000312" key="12">
    <source>
        <dbReference type="EMBL" id="AAB81031.1"/>
    </source>
</evidence>
<evidence type="ECO:0007744" key="13">
    <source>
        <dbReference type="PDB" id="2NZW"/>
    </source>
</evidence>
<evidence type="ECO:0007744" key="14">
    <source>
        <dbReference type="PDB" id="2NZX"/>
    </source>
</evidence>
<evidence type="ECO:0007744" key="15">
    <source>
        <dbReference type="PDB" id="2NZY"/>
    </source>
</evidence>
<evidence type="ECO:0007829" key="16">
    <source>
        <dbReference type="PDB" id="2NZW"/>
    </source>
</evidence>
<evidence type="ECO:0007829" key="17">
    <source>
        <dbReference type="PDB" id="2NZX"/>
    </source>
</evidence>
<evidence type="ECO:0007829" key="18">
    <source>
        <dbReference type="PDB" id="2NZY"/>
    </source>
</evidence>
<evidence type="ECO:0007829" key="19">
    <source>
        <dbReference type="PDB" id="5ZOI"/>
    </source>
</evidence>
<organism evidence="12">
    <name type="scientific">Helicobacter pylori</name>
    <name type="common">Campylobacter pylori</name>
    <dbReference type="NCBI Taxonomy" id="210"/>
    <lineage>
        <taxon>Bacteria</taxon>
        <taxon>Pseudomonadati</taxon>
        <taxon>Campylobacterota</taxon>
        <taxon>Epsilonproteobacteria</taxon>
        <taxon>Campylobacterales</taxon>
        <taxon>Helicobacteraceae</taxon>
        <taxon>Helicobacter</taxon>
    </lineage>
</organism>
<reference evidence="12" key="1">
    <citation type="journal article" date="1997" name="J. Biol. Chem.">
        <title>Cloning and heterologous expression of an alpha1,3-fucosyltransferase gene from the gastric pathogen Helicobacter pylori.</title>
        <authorList>
            <person name="Ge Z."/>
            <person name="Chan N.W.C."/>
            <person name="Palcic M.M."/>
            <person name="Taylor D.E."/>
        </authorList>
    </citation>
    <scope>NUCLEOTIDE SEQUENCE [GENOMIC DNA]</scope>
    <scope>FUNCTION</scope>
    <scope>CATALYTIC ACTIVITY</scope>
    <scope>SUBCELLULAR LOCATION</scope>
    <source>
        <strain evidence="12">ATCC 43629 / JCM 7656 / NCTC 11639 / UA802</strain>
    </source>
</reference>
<reference evidence="11" key="2">
    <citation type="journal article" date="2003" name="J. Biol. Chem.">
        <title>C-terminal amino acids of Helicobacter pylori alpha1,3/4 fucosyltransferases determine type I and type II transfer.</title>
        <authorList>
            <person name="Ma B."/>
            <person name="Wang G."/>
            <person name="Palcic M.M."/>
            <person name="Hazes B."/>
            <person name="Taylor D.E."/>
        </authorList>
    </citation>
    <scope>FUNCTION</scope>
    <scope>CATALYTIC ACTIVITY</scope>
    <scope>BIOPHYSICOCHEMICAL PROPERTIES</scope>
    <scope>PATHWAY</scope>
    <scope>REGION</scope>
    <scope>MUTAGENESIS OF 347-ASP--CYS-353</scope>
    <source>
        <strain evidence="6">ATCC 43629 / JCM 7656 / NCTC 11639 / UA802</strain>
    </source>
</reference>
<reference evidence="11" key="3">
    <citation type="journal article" date="2005" name="J. Biol. Chem.">
        <title>A single aromatic amino acid at the carboxyl terminus of Helicobacter pylori {alpha}1,3/4 fucosyltransferase determines substrate specificity.</title>
        <authorList>
            <person name="Ma B."/>
            <person name="Lau L.H."/>
            <person name="Palcic M.M."/>
            <person name="Hazes B."/>
            <person name="Taylor D.E."/>
        </authorList>
    </citation>
    <scope>FUNCTION</scope>
    <scope>CATALYTIC ACTIVITY</scope>
    <scope>PATHWAY</scope>
    <scope>MUTAGENESIS OF PHE-350 AND PHE-352</scope>
    <source>
        <strain evidence="7">ATCC 43629 / JCM 7656 / NCTC 11639 / UA802</strain>
    </source>
</reference>
<reference evidence="11" key="4">
    <citation type="journal article" date="2006" name="Biochemistry">
        <title>Carboxyl terminus of Helicobacter pylori alpha1,3-fucosyltransferase determines the structure and stability.</title>
        <authorList>
            <person name="Lin S.W."/>
            <person name="Yuan T.M."/>
            <person name="Li J.R."/>
            <person name="Lin C.H."/>
        </authorList>
    </citation>
    <scope>FUNCTION</scope>
    <scope>CATALYTIC ACTIVITY</scope>
    <scope>SUBUNIT</scope>
    <scope>PATHWAY</scope>
    <scope>DOMAIN</scope>
    <scope>REGION</scope>
    <scope>REPEAT</scope>
    <scope>MUTAGENESIS OF 456-ARG--LEU-478</scope>
    <source>
        <strain evidence="8">ATCC 43629 / JCM 7656 / NCTC 11639 / UA802</strain>
    </source>
</reference>
<reference evidence="13 14 15" key="5">
    <citation type="journal article" date="2007" name="J. Biol. Chem.">
        <title>Structure and mechanism of Helicobacter pylori fucosyltransferase. A basis for lipopolysaccharide variation and inhibitor design.</title>
        <authorList>
            <person name="Sun H.Y."/>
            <person name="Lin S.W."/>
            <person name="Ko T.P."/>
            <person name="Pan J.F."/>
            <person name="Liu C.L."/>
            <person name="Lin C.N."/>
            <person name="Wang A.H."/>
            <person name="Lin C.H."/>
        </authorList>
    </citation>
    <scope>X-RAY CRYSTALLOGRAPHY (2.05 ANGSTROMS) OF 1-363 IN COMPLEX WITH SUBSTRATE</scope>
    <scope>X-RAY CRYSTALLOGRAPHY (1.90 ANGSTROMS) OF 1-363</scope>
    <scope>FUNCTION</scope>
    <scope>CATALYTIC ACTIVITY</scope>
    <scope>PATHWAY</scope>
    <scope>MUTAGENESIS OF GLU-95; ARG-195; ASN-240; TYR-246; GLU-249; LYS-250 AND 456-ARG--LEU-478</scope>
    <source>
        <strain evidence="9">ATCC 43629 / JCM 7656 / NCTC 11639 / UA802</strain>
    </source>
</reference>
<proteinExistence type="evidence at protein level"/>
<dbReference type="EC" id="2.4.1.152" evidence="1 2 3 4 5"/>
<dbReference type="EMBL" id="AF008596">
    <property type="protein sequence ID" value="AAB81031.1"/>
    <property type="molecule type" value="Genomic_DNA"/>
</dbReference>
<dbReference type="PDB" id="2NZW">
    <property type="method" value="X-ray"/>
    <property type="resolution" value="1.90 A"/>
    <property type="chains" value="A/B/C=1-363"/>
</dbReference>
<dbReference type="PDB" id="2NZX">
    <property type="method" value="X-ray"/>
    <property type="resolution" value="1.90 A"/>
    <property type="chains" value="A/B/C=1-363"/>
</dbReference>
<dbReference type="PDB" id="2NZY">
    <property type="method" value="X-ray"/>
    <property type="resolution" value="2.05 A"/>
    <property type="chains" value="A/B/C=1-363"/>
</dbReference>
<dbReference type="PDB" id="5ZOI">
    <property type="method" value="X-ray"/>
    <property type="resolution" value="3.19 A"/>
    <property type="chains" value="A/B=1-412"/>
</dbReference>
<dbReference type="PDBsum" id="2NZW"/>
<dbReference type="PDBsum" id="2NZX"/>
<dbReference type="PDBsum" id="2NZY"/>
<dbReference type="PDBsum" id="5ZOI"/>
<dbReference type="SMR" id="O30511"/>
<dbReference type="CAZy" id="GT10">
    <property type="family name" value="Glycosyltransferase Family 10"/>
</dbReference>
<dbReference type="KEGG" id="ag:AAB81031"/>
<dbReference type="BRENDA" id="2.4.1.152">
    <property type="organism ID" value="2604"/>
</dbReference>
<dbReference type="BRENDA" id="2.4.1.214">
    <property type="organism ID" value="2604"/>
</dbReference>
<dbReference type="UniPathway" id="UPA00301"/>
<dbReference type="EvolutionaryTrace" id="O30511"/>
<dbReference type="GO" id="GO:0005737">
    <property type="term" value="C:cytoplasm"/>
    <property type="evidence" value="ECO:0007669"/>
    <property type="project" value="UniProtKB-SubCell"/>
</dbReference>
<dbReference type="GO" id="GO:0016020">
    <property type="term" value="C:membrane"/>
    <property type="evidence" value="ECO:0000314"/>
    <property type="project" value="UniProtKB"/>
</dbReference>
<dbReference type="GO" id="GO:0017083">
    <property type="term" value="F:4-galactosyl-N-acetylglucosaminide 3-alpha-L-fucosyltransferase activity"/>
    <property type="evidence" value="ECO:0000315"/>
    <property type="project" value="UniProtKB"/>
</dbReference>
<dbReference type="GO" id="GO:0042806">
    <property type="term" value="F:fucose binding"/>
    <property type="evidence" value="ECO:0000353"/>
    <property type="project" value="UniProtKB"/>
</dbReference>
<dbReference type="GO" id="GO:0042802">
    <property type="term" value="F:identical protein binding"/>
    <property type="evidence" value="ECO:0000353"/>
    <property type="project" value="UniProtKB"/>
</dbReference>
<dbReference type="GO" id="GO:0036065">
    <property type="term" value="P:fucosylation"/>
    <property type="evidence" value="ECO:0000315"/>
    <property type="project" value="UniProtKB"/>
</dbReference>
<dbReference type="GO" id="GO:0009103">
    <property type="term" value="P:lipopolysaccharide biosynthetic process"/>
    <property type="evidence" value="ECO:0007669"/>
    <property type="project" value="UniProtKB-KW"/>
</dbReference>
<dbReference type="GO" id="GO:0006486">
    <property type="term" value="P:protein glycosylation"/>
    <property type="evidence" value="ECO:0007669"/>
    <property type="project" value="InterPro"/>
</dbReference>
<dbReference type="FunFam" id="3.40.50.11660:FF:000008">
    <property type="entry name" value="Alpha-(1,3)-fucosyltransferase"/>
    <property type="match status" value="1"/>
</dbReference>
<dbReference type="Gene3D" id="1.20.5.400">
    <property type="match status" value="1"/>
</dbReference>
<dbReference type="Gene3D" id="3.40.50.11660">
    <property type="entry name" value="Glycosyl transferase family 10, C-terminal domain"/>
    <property type="match status" value="1"/>
</dbReference>
<dbReference type="InterPro" id="IPR016646">
    <property type="entry name" value="Alpha-1_3/4-FUT_helico"/>
</dbReference>
<dbReference type="InterPro" id="IPR041058">
    <property type="entry name" value="FucT_N"/>
</dbReference>
<dbReference type="InterPro" id="IPR055270">
    <property type="entry name" value="Glyco_tran_10_C"/>
</dbReference>
<dbReference type="InterPro" id="IPR001503">
    <property type="entry name" value="Glyco_trans_10"/>
</dbReference>
<dbReference type="InterPro" id="IPR038577">
    <property type="entry name" value="GT10-like_C_sf"/>
</dbReference>
<dbReference type="PANTHER" id="PTHR11929">
    <property type="entry name" value="ALPHA- 1,3 -FUCOSYLTRANSFERASE"/>
    <property type="match status" value="1"/>
</dbReference>
<dbReference type="PANTHER" id="PTHR11929:SF194">
    <property type="entry name" value="ALPHA-(1,3)-FUCOSYLTRANSFERASE 10"/>
    <property type="match status" value="1"/>
</dbReference>
<dbReference type="Pfam" id="PF18025">
    <property type="entry name" value="FucT_N"/>
    <property type="match status" value="1"/>
</dbReference>
<dbReference type="Pfam" id="PF00852">
    <property type="entry name" value="Glyco_transf_10"/>
    <property type="match status" value="1"/>
</dbReference>
<dbReference type="PIRSF" id="PIRSF016150">
    <property type="entry name" value="Alpha1_3/4FUT_helico"/>
    <property type="match status" value="1"/>
</dbReference>
<dbReference type="SUPFAM" id="SSF53756">
    <property type="entry name" value="UDP-Glycosyltransferase/glycogen phosphorylase"/>
    <property type="match status" value="1"/>
</dbReference>
<name>FUCT_HELPX</name>
<keyword id="KW-0002">3D-structure</keyword>
<keyword id="KW-0963">Cytoplasm</keyword>
<keyword id="KW-0328">Glycosyltransferase</keyword>
<keyword id="KW-0448">Lipopolysaccharide biosynthesis</keyword>
<keyword id="KW-0472">Membrane</keyword>
<keyword id="KW-0677">Repeat</keyword>
<keyword id="KW-0808">Transferase</keyword>